<keyword id="KW-0067">ATP-binding</keyword>
<keyword id="KW-0963">Cytoplasm</keyword>
<keyword id="KW-0418">Kinase</keyword>
<keyword id="KW-0547">Nucleotide-binding</keyword>
<keyword id="KW-1185">Reference proteome</keyword>
<keyword id="KW-0808">Transferase</keyword>
<evidence type="ECO:0000255" key="1">
    <source>
        <dbReference type="HAMAP-Rule" id="MF_00328"/>
    </source>
</evidence>
<dbReference type="EC" id="2.7.4.8" evidence="1"/>
<dbReference type="EMBL" id="CP000158">
    <property type="protein sequence ID" value="ABI76925.1"/>
    <property type="molecule type" value="Genomic_DNA"/>
</dbReference>
<dbReference type="RefSeq" id="WP_011647148.1">
    <property type="nucleotide sequence ID" value="NC_008358.1"/>
</dbReference>
<dbReference type="SMR" id="Q0C093"/>
<dbReference type="STRING" id="228405.HNE_2153"/>
<dbReference type="KEGG" id="hne:HNE_2153"/>
<dbReference type="eggNOG" id="COG0194">
    <property type="taxonomic scope" value="Bacteria"/>
</dbReference>
<dbReference type="HOGENOM" id="CLU_001715_1_0_5"/>
<dbReference type="Proteomes" id="UP000001959">
    <property type="component" value="Chromosome"/>
</dbReference>
<dbReference type="GO" id="GO:0005829">
    <property type="term" value="C:cytosol"/>
    <property type="evidence" value="ECO:0007669"/>
    <property type="project" value="TreeGrafter"/>
</dbReference>
<dbReference type="GO" id="GO:0005524">
    <property type="term" value="F:ATP binding"/>
    <property type="evidence" value="ECO:0007669"/>
    <property type="project" value="UniProtKB-UniRule"/>
</dbReference>
<dbReference type="GO" id="GO:0004385">
    <property type="term" value="F:guanylate kinase activity"/>
    <property type="evidence" value="ECO:0007669"/>
    <property type="project" value="UniProtKB-UniRule"/>
</dbReference>
<dbReference type="CDD" id="cd00071">
    <property type="entry name" value="GMPK"/>
    <property type="match status" value="1"/>
</dbReference>
<dbReference type="FunFam" id="3.30.63.10:FF:000005">
    <property type="entry name" value="Guanylate kinase"/>
    <property type="match status" value="1"/>
</dbReference>
<dbReference type="Gene3D" id="3.30.63.10">
    <property type="entry name" value="Guanylate Kinase phosphate binding domain"/>
    <property type="match status" value="1"/>
</dbReference>
<dbReference type="Gene3D" id="3.40.50.300">
    <property type="entry name" value="P-loop containing nucleotide triphosphate hydrolases"/>
    <property type="match status" value="1"/>
</dbReference>
<dbReference type="HAMAP" id="MF_00328">
    <property type="entry name" value="Guanylate_kinase"/>
    <property type="match status" value="1"/>
</dbReference>
<dbReference type="InterPro" id="IPR008145">
    <property type="entry name" value="GK/Ca_channel_bsu"/>
</dbReference>
<dbReference type="InterPro" id="IPR008144">
    <property type="entry name" value="Guanylate_kin-like_dom"/>
</dbReference>
<dbReference type="InterPro" id="IPR017665">
    <property type="entry name" value="Guanylate_kinase"/>
</dbReference>
<dbReference type="InterPro" id="IPR020590">
    <property type="entry name" value="Guanylate_kinase_CS"/>
</dbReference>
<dbReference type="InterPro" id="IPR027417">
    <property type="entry name" value="P-loop_NTPase"/>
</dbReference>
<dbReference type="NCBIfam" id="TIGR03263">
    <property type="entry name" value="guanyl_kin"/>
    <property type="match status" value="1"/>
</dbReference>
<dbReference type="PANTHER" id="PTHR23117:SF13">
    <property type="entry name" value="GUANYLATE KINASE"/>
    <property type="match status" value="1"/>
</dbReference>
<dbReference type="PANTHER" id="PTHR23117">
    <property type="entry name" value="GUANYLATE KINASE-RELATED"/>
    <property type="match status" value="1"/>
</dbReference>
<dbReference type="Pfam" id="PF00625">
    <property type="entry name" value="Guanylate_kin"/>
    <property type="match status" value="1"/>
</dbReference>
<dbReference type="SMART" id="SM00072">
    <property type="entry name" value="GuKc"/>
    <property type="match status" value="1"/>
</dbReference>
<dbReference type="SUPFAM" id="SSF52540">
    <property type="entry name" value="P-loop containing nucleoside triphosphate hydrolases"/>
    <property type="match status" value="1"/>
</dbReference>
<dbReference type="PROSITE" id="PS00856">
    <property type="entry name" value="GUANYLATE_KINASE_1"/>
    <property type="match status" value="1"/>
</dbReference>
<dbReference type="PROSITE" id="PS50052">
    <property type="entry name" value="GUANYLATE_KINASE_2"/>
    <property type="match status" value="1"/>
</dbReference>
<reference key="1">
    <citation type="journal article" date="2006" name="J. Bacteriol.">
        <title>Comparative genomic evidence for a close relationship between the dimorphic prosthecate bacteria Hyphomonas neptunium and Caulobacter crescentus.</title>
        <authorList>
            <person name="Badger J.H."/>
            <person name="Hoover T.R."/>
            <person name="Brun Y.V."/>
            <person name="Weiner R.M."/>
            <person name="Laub M.T."/>
            <person name="Alexandre G."/>
            <person name="Mrazek J."/>
            <person name="Ren Q."/>
            <person name="Paulsen I.T."/>
            <person name="Nelson K.E."/>
            <person name="Khouri H.M."/>
            <person name="Radune D."/>
            <person name="Sosa J."/>
            <person name="Dodson R.J."/>
            <person name="Sullivan S.A."/>
            <person name="Rosovitz M.J."/>
            <person name="Madupu R."/>
            <person name="Brinkac L.M."/>
            <person name="Durkin A.S."/>
            <person name="Daugherty S.C."/>
            <person name="Kothari S.P."/>
            <person name="Giglio M.G."/>
            <person name="Zhou L."/>
            <person name="Haft D.H."/>
            <person name="Selengut J.D."/>
            <person name="Davidsen T.M."/>
            <person name="Yang Q."/>
            <person name="Zafar N."/>
            <person name="Ward N.L."/>
        </authorList>
    </citation>
    <scope>NUCLEOTIDE SEQUENCE [LARGE SCALE GENOMIC DNA]</scope>
    <source>
        <strain>ATCC 15444</strain>
    </source>
</reference>
<comment type="function">
    <text evidence="1">Essential for recycling GMP and indirectly, cGMP.</text>
</comment>
<comment type="catalytic activity">
    <reaction evidence="1">
        <text>GMP + ATP = GDP + ADP</text>
        <dbReference type="Rhea" id="RHEA:20780"/>
        <dbReference type="ChEBI" id="CHEBI:30616"/>
        <dbReference type="ChEBI" id="CHEBI:58115"/>
        <dbReference type="ChEBI" id="CHEBI:58189"/>
        <dbReference type="ChEBI" id="CHEBI:456216"/>
        <dbReference type="EC" id="2.7.4.8"/>
    </reaction>
</comment>
<comment type="subcellular location">
    <subcellularLocation>
        <location evidence="1">Cytoplasm</location>
    </subcellularLocation>
</comment>
<comment type="similarity">
    <text evidence="1">Belongs to the guanylate kinase family.</text>
</comment>
<proteinExistence type="inferred from homology"/>
<organism>
    <name type="scientific">Hyphomonas neptunium (strain ATCC 15444)</name>
    <dbReference type="NCBI Taxonomy" id="228405"/>
    <lineage>
        <taxon>Bacteria</taxon>
        <taxon>Pseudomonadati</taxon>
        <taxon>Pseudomonadota</taxon>
        <taxon>Alphaproteobacteria</taxon>
        <taxon>Hyphomonadales</taxon>
        <taxon>Hyphomonadaceae</taxon>
        <taxon>Hyphomonas</taxon>
    </lineage>
</organism>
<sequence>MSNSGHPKDRGNRRGLMLVLSSPSGAGKTTLSRMLLEEFGDVKLSISATTRPPRPNEVHGEDYYFKTPDEFHRMIERREFLEWAHVFDKHYGTPKADTVARLEAGEDVLFDVDWQGADALHDQMPNDVVSVFILPPSIEALQARLMGRPGSTPELVARRMEDAKREIMHWRRYDYVIVNDDLNVAYQRLKRILLVERLKRLRQIDLEDHVRALLGEA</sequence>
<accession>Q0C093</accession>
<gene>
    <name evidence="1" type="primary">gmk</name>
    <name type="ordered locus">HNE_2153</name>
</gene>
<protein>
    <recommendedName>
        <fullName evidence="1">Guanylate kinase</fullName>
        <ecNumber evidence="1">2.7.4.8</ecNumber>
    </recommendedName>
    <alternativeName>
        <fullName evidence="1">GMP kinase</fullName>
    </alternativeName>
</protein>
<feature type="chain" id="PRO_0000266336" description="Guanylate kinase">
    <location>
        <begin position="1"/>
        <end position="217"/>
    </location>
</feature>
<feature type="domain" description="Guanylate kinase-like" evidence="1">
    <location>
        <begin position="15"/>
        <end position="194"/>
    </location>
</feature>
<feature type="binding site" evidence="1">
    <location>
        <begin position="22"/>
        <end position="29"/>
    </location>
    <ligand>
        <name>ATP</name>
        <dbReference type="ChEBI" id="CHEBI:30616"/>
    </ligand>
</feature>
<name>KGUA_HYPNA</name>